<keyword id="KW-0963">Cytoplasm</keyword>
<keyword id="KW-0444">Lipid biosynthesis</keyword>
<keyword id="KW-0443">Lipid metabolism</keyword>
<keyword id="KW-0594">Phospholipid biosynthesis</keyword>
<keyword id="KW-1208">Phospholipid metabolism</keyword>
<keyword id="KW-1185">Reference proteome</keyword>
<keyword id="KW-0808">Transferase</keyword>
<evidence type="ECO:0000255" key="1">
    <source>
        <dbReference type="HAMAP-Rule" id="MF_00019"/>
    </source>
</evidence>
<reference key="1">
    <citation type="journal article" date="1998" name="Nature">
        <title>The complete genome of the hyperthermophilic bacterium Aquifex aeolicus.</title>
        <authorList>
            <person name="Deckert G."/>
            <person name="Warren P.V."/>
            <person name="Gaasterland T."/>
            <person name="Young W.G."/>
            <person name="Lenox A.L."/>
            <person name="Graham D.E."/>
            <person name="Overbeek R."/>
            <person name="Snead M.A."/>
            <person name="Keller M."/>
            <person name="Aujay M."/>
            <person name="Huber R."/>
            <person name="Feldman R.A."/>
            <person name="Short J.M."/>
            <person name="Olsen G.J."/>
            <person name="Swanson R.V."/>
        </authorList>
    </citation>
    <scope>NUCLEOTIDE SEQUENCE [LARGE SCALE GENOMIC DNA]</scope>
    <source>
        <strain>VF5</strain>
    </source>
</reference>
<comment type="function">
    <text evidence="1">Catalyzes the reversible formation of acyl-phosphate (acyl-PO(4)) from acyl-[acyl-carrier-protein] (acyl-ACP). This enzyme utilizes acyl-ACP as fatty acyl donor, but not acyl-CoA.</text>
</comment>
<comment type="catalytic activity">
    <reaction evidence="1">
        <text>a fatty acyl-[ACP] + phosphate = an acyl phosphate + holo-[ACP]</text>
        <dbReference type="Rhea" id="RHEA:42292"/>
        <dbReference type="Rhea" id="RHEA-COMP:9685"/>
        <dbReference type="Rhea" id="RHEA-COMP:14125"/>
        <dbReference type="ChEBI" id="CHEBI:43474"/>
        <dbReference type="ChEBI" id="CHEBI:59918"/>
        <dbReference type="ChEBI" id="CHEBI:64479"/>
        <dbReference type="ChEBI" id="CHEBI:138651"/>
        <dbReference type="EC" id="2.3.1.274"/>
    </reaction>
</comment>
<comment type="pathway">
    <text evidence="1">Lipid metabolism; phospholipid metabolism.</text>
</comment>
<comment type="subunit">
    <text evidence="1">Homodimer. Probably interacts with PlsY.</text>
</comment>
<comment type="subcellular location">
    <subcellularLocation>
        <location evidence="1">Cytoplasm</location>
    </subcellularLocation>
    <text evidence="1">Associated with the membrane possibly through PlsY.</text>
</comment>
<comment type="similarity">
    <text evidence="1">Belongs to the PlsX family.</text>
</comment>
<proteinExistence type="inferred from homology"/>
<gene>
    <name evidence="1" type="primary">plsX</name>
    <name type="ordered locus">aq_1101</name>
</gene>
<accession>O67186</accession>
<protein>
    <recommendedName>
        <fullName evidence="1">Phosphate acyltransferase</fullName>
        <ecNumber evidence="1">2.3.1.274</ecNumber>
    </recommendedName>
    <alternativeName>
        <fullName evidence="1">Acyl-ACP phosphotransacylase</fullName>
    </alternativeName>
    <alternativeName>
        <fullName evidence="1">Acyl-[acyl-carrier-protein]--phosphate acyltransferase</fullName>
    </alternativeName>
    <alternativeName>
        <fullName evidence="1">Phosphate-acyl-ACP acyltransferase</fullName>
    </alternativeName>
</protein>
<dbReference type="EC" id="2.3.1.274" evidence="1"/>
<dbReference type="EMBL" id="AE000657">
    <property type="protein sequence ID" value="AAC07145.1"/>
    <property type="molecule type" value="Genomic_DNA"/>
</dbReference>
<dbReference type="PIR" id="G70394">
    <property type="entry name" value="G70394"/>
</dbReference>
<dbReference type="RefSeq" id="NP_213749.1">
    <property type="nucleotide sequence ID" value="NC_000918.1"/>
</dbReference>
<dbReference type="RefSeq" id="WP_010880687.1">
    <property type="nucleotide sequence ID" value="NC_000918.1"/>
</dbReference>
<dbReference type="SMR" id="O67186"/>
<dbReference type="FunCoup" id="O67186">
    <property type="interactions" value="250"/>
</dbReference>
<dbReference type="STRING" id="224324.aq_1101"/>
<dbReference type="EnsemblBacteria" id="AAC07145">
    <property type="protein sequence ID" value="AAC07145"/>
    <property type="gene ID" value="aq_1101"/>
</dbReference>
<dbReference type="KEGG" id="aae:aq_1101"/>
<dbReference type="PATRIC" id="fig|224324.8.peg.858"/>
<dbReference type="eggNOG" id="COG0416">
    <property type="taxonomic scope" value="Bacteria"/>
</dbReference>
<dbReference type="HOGENOM" id="CLU_039379_1_1_0"/>
<dbReference type="InParanoid" id="O67186"/>
<dbReference type="OrthoDB" id="9806408at2"/>
<dbReference type="UniPathway" id="UPA00085"/>
<dbReference type="Proteomes" id="UP000000798">
    <property type="component" value="Chromosome"/>
</dbReference>
<dbReference type="GO" id="GO:0005737">
    <property type="term" value="C:cytoplasm"/>
    <property type="evidence" value="ECO:0007669"/>
    <property type="project" value="UniProtKB-SubCell"/>
</dbReference>
<dbReference type="GO" id="GO:0043811">
    <property type="term" value="F:phosphate:acyl-[acyl carrier protein] acyltransferase activity"/>
    <property type="evidence" value="ECO:0007669"/>
    <property type="project" value="UniProtKB-UniRule"/>
</dbReference>
<dbReference type="GO" id="GO:0006633">
    <property type="term" value="P:fatty acid biosynthetic process"/>
    <property type="evidence" value="ECO:0007669"/>
    <property type="project" value="UniProtKB-UniRule"/>
</dbReference>
<dbReference type="GO" id="GO:0008654">
    <property type="term" value="P:phospholipid biosynthetic process"/>
    <property type="evidence" value="ECO:0007669"/>
    <property type="project" value="UniProtKB-KW"/>
</dbReference>
<dbReference type="Gene3D" id="3.40.718.10">
    <property type="entry name" value="Isopropylmalate Dehydrogenase"/>
    <property type="match status" value="1"/>
</dbReference>
<dbReference type="HAMAP" id="MF_00019">
    <property type="entry name" value="PlsX"/>
    <property type="match status" value="1"/>
</dbReference>
<dbReference type="InterPro" id="IPR003664">
    <property type="entry name" value="FA_synthesis"/>
</dbReference>
<dbReference type="InterPro" id="IPR012281">
    <property type="entry name" value="Phospholipid_synth_PlsX-like"/>
</dbReference>
<dbReference type="NCBIfam" id="TIGR00182">
    <property type="entry name" value="plsX"/>
    <property type="match status" value="1"/>
</dbReference>
<dbReference type="PANTHER" id="PTHR30100">
    <property type="entry name" value="FATTY ACID/PHOSPHOLIPID SYNTHESIS PROTEIN PLSX"/>
    <property type="match status" value="1"/>
</dbReference>
<dbReference type="PANTHER" id="PTHR30100:SF1">
    <property type="entry name" value="PHOSPHATE ACYLTRANSFERASE"/>
    <property type="match status" value="1"/>
</dbReference>
<dbReference type="Pfam" id="PF02504">
    <property type="entry name" value="FA_synthesis"/>
    <property type="match status" value="1"/>
</dbReference>
<dbReference type="PIRSF" id="PIRSF002465">
    <property type="entry name" value="Phsphlp_syn_PlsX"/>
    <property type="match status" value="1"/>
</dbReference>
<dbReference type="SUPFAM" id="SSF53659">
    <property type="entry name" value="Isocitrate/Isopropylmalate dehydrogenase-like"/>
    <property type="match status" value="1"/>
</dbReference>
<sequence>MLRIAVDCMGGDYAPLEIVRGCILAAKELGYKIYLVGDKEQIIPILEKAKEHNNSLLEVVHAPDKVEMHEPPSNVLKKKNSSLYVAGMLVRKGEADGLVSAGNTGAVLAVGKFIVGAEEEVERPSIGVALPNPKGKTVLIDVGANVDCKPKHLVQFAVIGHTYAEEILGIKNPRVGILSIGEEEGKGNELVKETYPLLKATKLNFKGNAEGRDIYAGTFDVIVCDGFVGNVILKASESLGLAVVQMIKEEIKRSILAKLGALLLMPALNRFKKKADFAEYGGIPLLGAKKPVIITHGRANAKAIKNAVRVAGEFLNTDFNKKLVYNLKTLIPEGVKV</sequence>
<name>PLSX_AQUAE</name>
<feature type="chain" id="PRO_0000189837" description="Phosphate acyltransferase">
    <location>
        <begin position="1"/>
        <end position="337"/>
    </location>
</feature>
<organism>
    <name type="scientific">Aquifex aeolicus (strain VF5)</name>
    <dbReference type="NCBI Taxonomy" id="224324"/>
    <lineage>
        <taxon>Bacteria</taxon>
        <taxon>Pseudomonadati</taxon>
        <taxon>Aquificota</taxon>
        <taxon>Aquificia</taxon>
        <taxon>Aquificales</taxon>
        <taxon>Aquificaceae</taxon>
        <taxon>Aquifex</taxon>
    </lineage>
</organism>